<organism>
    <name type="scientific">Saccharomyces cerevisiae (strain ATCC 204508 / S288c)</name>
    <name type="common">Baker's yeast</name>
    <dbReference type="NCBI Taxonomy" id="559292"/>
    <lineage>
        <taxon>Eukaryota</taxon>
        <taxon>Fungi</taxon>
        <taxon>Dikarya</taxon>
        <taxon>Ascomycota</taxon>
        <taxon>Saccharomycotina</taxon>
        <taxon>Saccharomycetes</taxon>
        <taxon>Saccharomycetales</taxon>
        <taxon>Saccharomycetaceae</taxon>
        <taxon>Saccharomyces</taxon>
    </lineage>
</organism>
<reference key="1">
    <citation type="journal article" date="1994" name="Science">
        <title>Complete nucleotide sequence of Saccharomyces cerevisiae chromosome VIII.</title>
        <authorList>
            <person name="Johnston M."/>
            <person name="Andrews S."/>
            <person name="Brinkman R."/>
            <person name="Cooper J."/>
            <person name="Ding H."/>
            <person name="Dover J."/>
            <person name="Du Z."/>
            <person name="Favello A."/>
            <person name="Fulton L."/>
            <person name="Gattung S."/>
            <person name="Geisel C."/>
            <person name="Kirsten J."/>
            <person name="Kucaba T."/>
            <person name="Hillier L.W."/>
            <person name="Jier M."/>
            <person name="Johnston L."/>
            <person name="Langston Y."/>
            <person name="Latreille P."/>
            <person name="Louis E.J."/>
            <person name="Macri C."/>
            <person name="Mardis E."/>
            <person name="Menezes S."/>
            <person name="Mouser L."/>
            <person name="Nhan M."/>
            <person name="Rifkin L."/>
            <person name="Riles L."/>
            <person name="St Peter H."/>
            <person name="Trevaskis E."/>
            <person name="Vaughan K."/>
            <person name="Vignati D."/>
            <person name="Wilcox L."/>
            <person name="Wohldman P."/>
            <person name="Waterston R."/>
            <person name="Wilson R."/>
            <person name="Vaudin M."/>
        </authorList>
    </citation>
    <scope>NUCLEOTIDE SEQUENCE [LARGE SCALE GENOMIC DNA]</scope>
    <source>
        <strain>ATCC 204508 / S288c</strain>
    </source>
</reference>
<reference key="2">
    <citation type="journal article" date="2014" name="G3 (Bethesda)">
        <title>The reference genome sequence of Saccharomyces cerevisiae: Then and now.</title>
        <authorList>
            <person name="Engel S.R."/>
            <person name="Dietrich F.S."/>
            <person name="Fisk D.G."/>
            <person name="Binkley G."/>
            <person name="Balakrishnan R."/>
            <person name="Costanzo M.C."/>
            <person name="Dwight S.S."/>
            <person name="Hitz B.C."/>
            <person name="Karra K."/>
            <person name="Nash R.S."/>
            <person name="Weng S."/>
            <person name="Wong E.D."/>
            <person name="Lloyd P."/>
            <person name="Skrzypek M.S."/>
            <person name="Miyasato S.R."/>
            <person name="Simison M."/>
            <person name="Cherry J.M."/>
        </authorList>
    </citation>
    <scope>GENOME REANNOTATION</scope>
    <source>
        <strain>ATCC 204508 / S288c</strain>
    </source>
</reference>
<reference key="3">
    <citation type="journal article" date="1997" name="Mol. Cell. Biol.">
        <title>SSP1, a gene necessary for proper completion of meiotic divisions and spore formation in Saccharomyces cerevisiae.</title>
        <authorList>
            <person name="Nag D.K."/>
            <person name="Koonce M.P."/>
            <person name="Axelrod J."/>
        </authorList>
    </citation>
    <scope>FUNCTION</scope>
    <scope>DEVELOPMENTAL STAGE</scope>
</reference>
<reference key="4">
    <citation type="journal article" date="2001" name="EMBO J.">
        <title>Prospore membrane formation linked to the leading edge protein (LEP) coat assembly.</title>
        <authorList>
            <person name="Moreno-Borchart A.C."/>
            <person name="Strasser K."/>
            <person name="Finkbeiner M.G."/>
            <person name="Shevchenko A."/>
            <person name="Shevchenko A."/>
            <person name="Knop M."/>
        </authorList>
    </citation>
    <scope>FUNCTION</scope>
    <scope>SUBCELLULAR LOCATION</scope>
    <scope>PHOSPHORYLATION</scope>
    <scope>COMPOSITION OF A SPB COMPLEX</scope>
    <scope>INTERACTION WITH ADY3</scope>
</reference>
<keyword id="KW-0131">Cell cycle</keyword>
<keyword id="KW-0132">Cell division</keyword>
<keyword id="KW-0175">Coiled coil</keyword>
<keyword id="KW-0469">Meiosis</keyword>
<keyword id="KW-0472">Membrane</keyword>
<keyword id="KW-0597">Phosphoprotein</keyword>
<keyword id="KW-1185">Reference proteome</keyword>
<keyword id="KW-0749">Sporulation</keyword>
<dbReference type="EMBL" id="U00028">
    <property type="protein sequence ID" value="AAB68456.1"/>
    <property type="molecule type" value="Genomic_DNA"/>
</dbReference>
<dbReference type="EMBL" id="BK006934">
    <property type="protein sequence ID" value="DAA06876.1"/>
    <property type="molecule type" value="Genomic_DNA"/>
</dbReference>
<dbReference type="PIR" id="S46675">
    <property type="entry name" value="S46675"/>
</dbReference>
<dbReference type="RefSeq" id="NP_012054.1">
    <property type="nucleotide sequence ID" value="NM_001179315.1"/>
</dbReference>
<dbReference type="SMR" id="P38871"/>
<dbReference type="BioGRID" id="36617">
    <property type="interactions" value="86"/>
</dbReference>
<dbReference type="DIP" id="DIP-1674N"/>
<dbReference type="FunCoup" id="P38871">
    <property type="interactions" value="214"/>
</dbReference>
<dbReference type="IntAct" id="P38871">
    <property type="interactions" value="5"/>
</dbReference>
<dbReference type="MINT" id="P38871"/>
<dbReference type="STRING" id="4932.YHR184W"/>
<dbReference type="iPTMnet" id="P38871"/>
<dbReference type="PaxDb" id="4932-YHR184W"/>
<dbReference type="PeptideAtlas" id="P38871"/>
<dbReference type="EnsemblFungi" id="YHR184W_mRNA">
    <property type="protein sequence ID" value="YHR184W"/>
    <property type="gene ID" value="YHR184W"/>
</dbReference>
<dbReference type="GeneID" id="856590"/>
<dbReference type="KEGG" id="sce:YHR184W"/>
<dbReference type="AGR" id="SGD:S000001227"/>
<dbReference type="SGD" id="S000001227">
    <property type="gene designation" value="SSP1"/>
</dbReference>
<dbReference type="VEuPathDB" id="FungiDB:YHR184W"/>
<dbReference type="eggNOG" id="ENOG502RZY5">
    <property type="taxonomic scope" value="Eukaryota"/>
</dbReference>
<dbReference type="HOGENOM" id="CLU_478292_0_0_1"/>
<dbReference type="InParanoid" id="P38871"/>
<dbReference type="OMA" id="CIREQEL"/>
<dbReference type="OrthoDB" id="4070295at2759"/>
<dbReference type="BioCyc" id="YEAST:G3O-31214-MONOMER"/>
<dbReference type="BioGRID-ORCS" id="856590">
    <property type="hits" value="0 hits in 10 CRISPR screens"/>
</dbReference>
<dbReference type="PRO" id="PR:P38871"/>
<dbReference type="Proteomes" id="UP000002311">
    <property type="component" value="Chromosome VIII"/>
</dbReference>
<dbReference type="RNAct" id="P38871">
    <property type="molecule type" value="protein"/>
</dbReference>
<dbReference type="GO" id="GO:0005628">
    <property type="term" value="C:prospore membrane"/>
    <property type="evidence" value="ECO:0000314"/>
    <property type="project" value="SGD"/>
</dbReference>
<dbReference type="GO" id="GO:0070056">
    <property type="term" value="C:prospore membrane leading edge"/>
    <property type="evidence" value="ECO:0000314"/>
    <property type="project" value="SGD"/>
</dbReference>
<dbReference type="GO" id="GO:0030476">
    <property type="term" value="P:ascospore wall assembly"/>
    <property type="evidence" value="ECO:0000315"/>
    <property type="project" value="SGD"/>
</dbReference>
<dbReference type="GO" id="GO:0032120">
    <property type="term" value="P:ascospore-type prospore membrane formation"/>
    <property type="evidence" value="ECO:0000315"/>
    <property type="project" value="SGD"/>
</dbReference>
<dbReference type="GO" id="GO:0051301">
    <property type="term" value="P:cell division"/>
    <property type="evidence" value="ECO:0007669"/>
    <property type="project" value="UniProtKB-KW"/>
</dbReference>
<comment type="function">
    <text evidence="3 4">Involved in the pathway that organizes the shaping and sizing of the prospore membrane (PSM) during sporulation. May be required for the formation of ADY3 and DON1-containing protein coats at the leading edge of the PSMs during meiosis II.</text>
</comment>
<comment type="subunit">
    <text evidence="3">Interacts directly with ADY3. Probable component of a spindle pole body (SPB) complex composed of ADY3, SSP1, DON1, MPC54, SPO21/MPC70, NUD1 and CNM67.</text>
</comment>
<comment type="interaction">
    <interactant intactId="EBI-24852">
        <id>P38871</id>
    </interactant>
    <interactant intactId="EBI-33406">
        <id>Q07732</id>
        <label>ADY3</label>
    </interactant>
    <organismsDiffer>false</organismsDiffer>
    <experiments>3</experiments>
</comment>
<comment type="subcellular location">
    <subcellularLocation>
        <location evidence="3">Prospore membrane</location>
    </subcellularLocation>
    <text>Localizes to precursors of the PSM and to the leading edge, which cover the ring-shape opening of the PSMs during meiosis II. Some fraction colocalizes with DON1.</text>
</comment>
<comment type="developmental stage">
    <text evidence="4">Meiosis-specific. Expressed from 3 to 9 hours after induction of sporulation. Not expressed during mitosis.</text>
</comment>
<comment type="PTM">
    <text evidence="3">Phosphorylated.</text>
</comment>
<gene>
    <name type="primary">SSP1</name>
    <name type="ordered locus">YHR184W</name>
</gene>
<name>SSP1_YEAST</name>
<sequence>MRSSGTYENDPSGEITSTSPKQSKQKKPTKFRERMRRWLQNGKNNNHQGEEDVPEIFNKNFYPQTGMTAFNNNDNGEVQDVTNNFFLPSEDESGPVQSSVKTFLTGNNDEDSNFQQNQNPKQKSELPKSPYRQKPTQEIALLKDLFVTNKYDDPYLNSSTRFGNITSTFPSSLSLRTVTLQTIKKRIDCISAKKKEVWKTEEKFLKDILMWLQSSNFEDPDTISLIHEIEKIFEEDIHFEQNVSDCLKEISNNFEYICMRETQLINEGNILKNDLKKYAKAREHKGEKHEDTEVLREKVISSQKSFDVTKRHYKHAISITTRQLFMNLAFEYYENCSDMKDISRKYLQESLSTLQTIDTLSFSEELEKIRKRRFDKFWAKTNPDPTNNIQKFVNMRTGVAGFNDSLMNHLYGKLSFGVAPVEEELQNSQPEHTDVPENVWNEVLSDYNSMDGNPITSNKFLSAKELEPDQLVELLAQEKEEKEAKNISSSTAEVPSISQPEIKKENLESNDSLILRSTKRNVNVNAASLRNLSIKKTQVKPESASEESKVLAAALNDAKQNLDENVWRTPI</sequence>
<proteinExistence type="evidence at protein level"/>
<accession>P38871</accession>
<accession>D3DLD2</accession>
<evidence type="ECO:0000255" key="1"/>
<evidence type="ECO:0000256" key="2">
    <source>
        <dbReference type="SAM" id="MobiDB-lite"/>
    </source>
</evidence>
<evidence type="ECO:0000269" key="3">
    <source>
    </source>
</evidence>
<evidence type="ECO:0000269" key="4">
    <source>
    </source>
</evidence>
<protein>
    <recommendedName>
        <fullName>Sporulation-specific protein 1</fullName>
    </recommendedName>
</protein>
<feature type="chain" id="PRO_0000072216" description="Sporulation-specific protein 1">
    <location>
        <begin position="1"/>
        <end position="571"/>
    </location>
</feature>
<feature type="region of interest" description="Disordered" evidence="2">
    <location>
        <begin position="1"/>
        <end position="53"/>
    </location>
</feature>
<feature type="region of interest" description="Disordered" evidence="2">
    <location>
        <begin position="67"/>
        <end position="133"/>
    </location>
</feature>
<feature type="region of interest" description="Disordered" evidence="2">
    <location>
        <begin position="482"/>
        <end position="501"/>
    </location>
</feature>
<feature type="coiled-coil region" evidence="1">
    <location>
        <begin position="469"/>
        <end position="486"/>
    </location>
</feature>
<feature type="coiled-coil region" evidence="1">
    <location>
        <begin position="542"/>
        <end position="566"/>
    </location>
</feature>
<feature type="compositionally biased region" description="Basic residues" evidence="2">
    <location>
        <begin position="23"/>
        <end position="37"/>
    </location>
</feature>
<feature type="compositionally biased region" description="Polar residues" evidence="2">
    <location>
        <begin position="67"/>
        <end position="86"/>
    </location>
</feature>
<feature type="compositionally biased region" description="Polar residues" evidence="2">
    <location>
        <begin position="95"/>
        <end position="121"/>
    </location>
</feature>
<feature type="compositionally biased region" description="Polar residues" evidence="2">
    <location>
        <begin position="486"/>
        <end position="499"/>
    </location>
</feature>